<gene>
    <name type="primary">prsA1</name>
    <name type="ordered locus">LJ_1673</name>
</gene>
<keyword id="KW-1003">Cell membrane</keyword>
<keyword id="KW-0413">Isomerase</keyword>
<keyword id="KW-0449">Lipoprotein</keyword>
<keyword id="KW-0472">Membrane</keyword>
<keyword id="KW-0564">Palmitate</keyword>
<keyword id="KW-0697">Rotamase</keyword>
<keyword id="KW-0732">Signal</keyword>
<reference key="1">
    <citation type="journal article" date="2004" name="Proc. Natl. Acad. Sci. U.S.A.">
        <title>The genome sequence of the probiotic intestinal bacterium Lactobacillus johnsonii NCC 533.</title>
        <authorList>
            <person name="Pridmore R.D."/>
            <person name="Berger B."/>
            <person name="Desiere F."/>
            <person name="Vilanova D."/>
            <person name="Barretto C."/>
            <person name="Pittet A.-C."/>
            <person name="Zwahlen M.-C."/>
            <person name="Rouvet M."/>
            <person name="Altermann E."/>
            <person name="Barrangou R."/>
            <person name="Mollet B."/>
            <person name="Mercenier A."/>
            <person name="Klaenhammer T."/>
            <person name="Arigoni F."/>
            <person name="Schell M.A."/>
        </authorList>
    </citation>
    <scope>NUCLEOTIDE SEQUENCE [LARGE SCALE GENOMIC DNA]</scope>
    <source>
        <strain>CNCM I-1225 / La1 / NCC 533</strain>
    </source>
</reference>
<organism>
    <name type="scientific">Lactobacillus johnsonii (strain CNCM I-12250 / La1 / NCC 533)</name>
    <dbReference type="NCBI Taxonomy" id="257314"/>
    <lineage>
        <taxon>Bacteria</taxon>
        <taxon>Bacillati</taxon>
        <taxon>Bacillota</taxon>
        <taxon>Bacilli</taxon>
        <taxon>Lactobacillales</taxon>
        <taxon>Lactobacillaceae</taxon>
        <taxon>Lactobacillus</taxon>
    </lineage>
</organism>
<name>PRSA1_LACJO</name>
<comment type="function">
    <text evidence="1">Plays a major role in protein secretion by helping the post-translocational extracellular folding of several secreted proteins.</text>
</comment>
<comment type="catalytic activity">
    <reaction>
        <text>[protein]-peptidylproline (omega=180) = [protein]-peptidylproline (omega=0)</text>
        <dbReference type="Rhea" id="RHEA:16237"/>
        <dbReference type="Rhea" id="RHEA-COMP:10747"/>
        <dbReference type="Rhea" id="RHEA-COMP:10748"/>
        <dbReference type="ChEBI" id="CHEBI:83833"/>
        <dbReference type="ChEBI" id="CHEBI:83834"/>
        <dbReference type="EC" id="5.2.1.8"/>
    </reaction>
</comment>
<comment type="subcellular location">
    <subcellularLocation>
        <location evidence="3">Cell membrane</location>
        <topology evidence="3">Lipid-anchor</topology>
    </subcellularLocation>
</comment>
<comment type="similarity">
    <text evidence="3">Belongs to the PrsA family.</text>
</comment>
<accession>P60750</accession>
<sequence length="298" mass="33048">MNKTWKKAATVLAFAGIALSATACSGGKAVVTYKGGKITESQYYDKMKESQAGQSTLASMIVSDALESQYGKDVTQKQVDKEYNKYKKQYGSQFDSVLEQNGMTASTFKDNLKTNLLTEAALKHIKKITPAQEKKAWKNYQPEVTVQHILVSKKSTAEDVIKQLQDGGDFKKLAKKYSTDTATKNDAGKLPAFDSTDSTLDSSFKTAAFKLKTGEITTTPVKTQYGYHVIKMIKHPAKGTFKEHKKQIDNQIYQSMSEDQNVMRSVIATVLKRADVSIKDKDLKNVLSQYVSSDSLSK</sequence>
<dbReference type="EC" id="5.2.1.8"/>
<dbReference type="EMBL" id="AE017198">
    <property type="protein sequence ID" value="AAS09446.1"/>
    <property type="molecule type" value="Genomic_DNA"/>
</dbReference>
<dbReference type="RefSeq" id="WP_004897825.1">
    <property type="nucleotide sequence ID" value="NC_005362.1"/>
</dbReference>
<dbReference type="SMR" id="P60750"/>
<dbReference type="KEGG" id="ljo:LJ_1673"/>
<dbReference type="eggNOG" id="COG0760">
    <property type="taxonomic scope" value="Bacteria"/>
</dbReference>
<dbReference type="HOGENOM" id="CLU_034646_6_1_9"/>
<dbReference type="Proteomes" id="UP000000581">
    <property type="component" value="Chromosome"/>
</dbReference>
<dbReference type="GO" id="GO:0005886">
    <property type="term" value="C:plasma membrane"/>
    <property type="evidence" value="ECO:0007669"/>
    <property type="project" value="UniProtKB-SubCell"/>
</dbReference>
<dbReference type="GO" id="GO:0003755">
    <property type="term" value="F:peptidyl-prolyl cis-trans isomerase activity"/>
    <property type="evidence" value="ECO:0007669"/>
    <property type="project" value="UniProtKB-UniRule"/>
</dbReference>
<dbReference type="GO" id="GO:0006457">
    <property type="term" value="P:protein folding"/>
    <property type="evidence" value="ECO:0007669"/>
    <property type="project" value="UniProtKB-UniRule"/>
</dbReference>
<dbReference type="Gene3D" id="3.10.50.40">
    <property type="match status" value="1"/>
</dbReference>
<dbReference type="HAMAP" id="MF_01145">
    <property type="entry name" value="Foldase_PrsA"/>
    <property type="match status" value="1"/>
</dbReference>
<dbReference type="InterPro" id="IPR023059">
    <property type="entry name" value="Foldase_PrsA"/>
</dbReference>
<dbReference type="InterPro" id="IPR046357">
    <property type="entry name" value="PPIase_dom_sf"/>
</dbReference>
<dbReference type="InterPro" id="IPR000297">
    <property type="entry name" value="PPIase_PpiC"/>
</dbReference>
<dbReference type="InterPro" id="IPR050245">
    <property type="entry name" value="PrsA_foldase"/>
</dbReference>
<dbReference type="InterPro" id="IPR027304">
    <property type="entry name" value="Trigger_fact/SurA_dom_sf"/>
</dbReference>
<dbReference type="NCBIfam" id="NF003356">
    <property type="entry name" value="PRK04405.1"/>
    <property type="match status" value="1"/>
</dbReference>
<dbReference type="PANTHER" id="PTHR47245:SF1">
    <property type="entry name" value="FOLDASE PROTEIN PRSA"/>
    <property type="match status" value="1"/>
</dbReference>
<dbReference type="PANTHER" id="PTHR47245">
    <property type="entry name" value="PEPTIDYLPROLYL ISOMERASE"/>
    <property type="match status" value="1"/>
</dbReference>
<dbReference type="Pfam" id="PF13616">
    <property type="entry name" value="Rotamase_3"/>
    <property type="match status" value="1"/>
</dbReference>
<dbReference type="SUPFAM" id="SSF54534">
    <property type="entry name" value="FKBP-like"/>
    <property type="match status" value="1"/>
</dbReference>
<dbReference type="SUPFAM" id="SSF109998">
    <property type="entry name" value="Triger factor/SurA peptide-binding domain-like"/>
    <property type="match status" value="1"/>
</dbReference>
<dbReference type="PROSITE" id="PS50198">
    <property type="entry name" value="PPIC_PPIASE_2"/>
    <property type="match status" value="1"/>
</dbReference>
<dbReference type="PROSITE" id="PS51257">
    <property type="entry name" value="PROKAR_LIPOPROTEIN"/>
    <property type="match status" value="1"/>
</dbReference>
<proteinExistence type="inferred from homology"/>
<protein>
    <recommendedName>
        <fullName>Foldase protein PrsA 1</fullName>
        <ecNumber>5.2.1.8</ecNumber>
    </recommendedName>
</protein>
<feature type="signal peptide" evidence="2">
    <location>
        <begin position="1"/>
        <end position="23"/>
    </location>
</feature>
<feature type="chain" id="PRO_0000029315" description="Foldase protein PrsA 1">
    <location>
        <begin position="24"/>
        <end position="298"/>
    </location>
</feature>
<feature type="domain" description="PpiC">
    <location>
        <begin position="141"/>
        <end position="234"/>
    </location>
</feature>
<feature type="lipid moiety-binding region" description="N-palmitoyl cysteine" evidence="2">
    <location>
        <position position="24"/>
    </location>
</feature>
<feature type="lipid moiety-binding region" description="S-diacylglycerol cysteine" evidence="2">
    <location>
        <position position="24"/>
    </location>
</feature>
<evidence type="ECO:0000250" key="1"/>
<evidence type="ECO:0000255" key="2"/>
<evidence type="ECO:0000305" key="3"/>